<evidence type="ECO:0000256" key="1">
    <source>
        <dbReference type="SAM" id="MobiDB-lite"/>
    </source>
</evidence>
<evidence type="ECO:0000305" key="2"/>
<feature type="chain" id="PRO_0000129740" description="Large ribosomal subunit protein uL2m">
    <location>
        <begin position="1"/>
        <end position="259"/>
    </location>
</feature>
<feature type="region of interest" description="Disordered" evidence="1">
    <location>
        <begin position="234"/>
        <end position="259"/>
    </location>
</feature>
<feature type="compositionally biased region" description="Basic and acidic residues" evidence="1">
    <location>
        <begin position="250"/>
        <end position="259"/>
    </location>
</feature>
<protein>
    <recommendedName>
        <fullName evidence="2">Large ribosomal subunit protein uL2m</fullName>
    </recommendedName>
    <alternativeName>
        <fullName>60S ribosomal protein L2, mitochondrial</fullName>
    </alternativeName>
</protein>
<gene>
    <name type="primary">RPL2</name>
</gene>
<reference key="1">
    <citation type="journal article" date="1990" name="Nucleic Acids Res.">
        <title>Nucleotide sequence of the mitochondrial genome of Paramecium.</title>
        <authorList>
            <person name="Pritchard A.E."/>
            <person name="Seilhamer J.J."/>
            <person name="Mahalingam R."/>
            <person name="Sable C.L."/>
            <person name="Venuti S.E."/>
            <person name="Cummings D.J."/>
        </authorList>
    </citation>
    <scope>NUCLEOTIDE SEQUENCE [GENOMIC DNA]</scope>
    <source>
        <strain>Stock 51</strain>
    </source>
</reference>
<reference key="2">
    <citation type="journal article" date="1989" name="Gene">
        <title>An unusual region of Paramecium mitochondrial DNA containing chloroplast-like genes.</title>
        <authorList>
            <person name="Pritchard A.E."/>
            <person name="Venuti S.E."/>
            <person name="Ghalambor M.A."/>
            <person name="Sable C.L."/>
            <person name="Cummings D.J."/>
        </authorList>
    </citation>
    <scope>NUCLEOTIDE SEQUENCE [GENOMIC DNA]</scope>
    <source>
        <strain>Stock 51</strain>
    </source>
</reference>
<keyword id="KW-0496">Mitochondrion</keyword>
<keyword id="KW-0687">Ribonucleoprotein</keyword>
<keyword id="KW-0689">Ribosomal protein</keyword>
<proteinExistence type="inferred from homology"/>
<accession>P15765</accession>
<dbReference type="EMBL" id="M26930">
    <property type="protein sequence ID" value="AAA79258.1"/>
    <property type="molecule type" value="Genomic_DNA"/>
</dbReference>
<dbReference type="EMBL" id="X15917">
    <property type="protein sequence ID" value="CAA34047.1"/>
    <property type="molecule type" value="Genomic_DNA"/>
</dbReference>
<dbReference type="PIR" id="JS0236">
    <property type="entry name" value="R5PPL2"/>
</dbReference>
<dbReference type="SMR" id="P15765"/>
<dbReference type="GO" id="GO:0005739">
    <property type="term" value="C:mitochondrion"/>
    <property type="evidence" value="ECO:0007669"/>
    <property type="project" value="UniProtKB-SubCell"/>
</dbReference>
<dbReference type="GO" id="GO:1990904">
    <property type="term" value="C:ribonucleoprotein complex"/>
    <property type="evidence" value="ECO:0007669"/>
    <property type="project" value="UniProtKB-KW"/>
</dbReference>
<dbReference type="GO" id="GO:0005840">
    <property type="term" value="C:ribosome"/>
    <property type="evidence" value="ECO:0007669"/>
    <property type="project" value="UniProtKB-KW"/>
</dbReference>
<dbReference type="GO" id="GO:0003735">
    <property type="term" value="F:structural constituent of ribosome"/>
    <property type="evidence" value="ECO:0007669"/>
    <property type="project" value="InterPro"/>
</dbReference>
<dbReference type="GO" id="GO:0006412">
    <property type="term" value="P:translation"/>
    <property type="evidence" value="ECO:0007669"/>
    <property type="project" value="InterPro"/>
</dbReference>
<dbReference type="Gene3D" id="2.40.50.140">
    <property type="entry name" value="Nucleic acid-binding proteins"/>
    <property type="match status" value="1"/>
</dbReference>
<dbReference type="Gene3D" id="4.10.950.10">
    <property type="entry name" value="Ribosomal protein L2, domain 3"/>
    <property type="match status" value="1"/>
</dbReference>
<dbReference type="InterPro" id="IPR012340">
    <property type="entry name" value="NA-bd_OB-fold"/>
</dbReference>
<dbReference type="InterPro" id="IPR002171">
    <property type="entry name" value="Ribosomal_uL2"/>
</dbReference>
<dbReference type="InterPro" id="IPR022669">
    <property type="entry name" value="Ribosomal_uL2_C"/>
</dbReference>
<dbReference type="InterPro" id="IPR022671">
    <property type="entry name" value="Ribosomal_uL2_CS"/>
</dbReference>
<dbReference type="InterPro" id="IPR014726">
    <property type="entry name" value="Ribosomal_uL2_dom3"/>
</dbReference>
<dbReference type="InterPro" id="IPR008991">
    <property type="entry name" value="Translation_prot_SH3-like_sf"/>
</dbReference>
<dbReference type="PANTHER" id="PTHR13691:SF5">
    <property type="entry name" value="LARGE RIBOSOMAL SUBUNIT PROTEIN UL2M"/>
    <property type="match status" value="1"/>
</dbReference>
<dbReference type="PANTHER" id="PTHR13691">
    <property type="entry name" value="RIBOSOMAL PROTEIN L2"/>
    <property type="match status" value="1"/>
</dbReference>
<dbReference type="Pfam" id="PF03947">
    <property type="entry name" value="Ribosomal_L2_C"/>
    <property type="match status" value="1"/>
</dbReference>
<dbReference type="PIRSF" id="PIRSF002158">
    <property type="entry name" value="Ribosomal_L2"/>
    <property type="match status" value="1"/>
</dbReference>
<dbReference type="SMART" id="SM01382">
    <property type="entry name" value="Ribosomal_L2_C"/>
    <property type="match status" value="1"/>
</dbReference>
<dbReference type="SUPFAM" id="SSF50249">
    <property type="entry name" value="Nucleic acid-binding proteins"/>
    <property type="match status" value="1"/>
</dbReference>
<dbReference type="SUPFAM" id="SSF50104">
    <property type="entry name" value="Translation proteins SH3-like domain"/>
    <property type="match status" value="1"/>
</dbReference>
<dbReference type="PROSITE" id="PS00467">
    <property type="entry name" value="RIBOSOMAL_L2"/>
    <property type="match status" value="1"/>
</dbReference>
<name>RM02_PARTE</name>
<sequence>MYELKKSKKSKARFFSTTSTYFSYRKHQLFKFYIPKNPSRNNTGKVSMRCKRKKFKNLDLAINYARIEMGRNCLITKLSFWKEKKPYVALVRDSYNSLSYYIAPAGFFVGRTLKTLPTKHDYYKKGGWKFYIRGLGTYVMLRVLRVNDVIFNLLSPSRVLYRLALAAGTYFKILYQSFCKTFYVMTIPSGLIIRVPSEGLAVMGRNSNTQNNKRVLGLAGVNFFNGTNPRVRGVAMNPVDHPNGGRTKTPKPERSPGVE</sequence>
<organism>
    <name type="scientific">Paramecium tetraurelia</name>
    <dbReference type="NCBI Taxonomy" id="5888"/>
    <lineage>
        <taxon>Eukaryota</taxon>
        <taxon>Sar</taxon>
        <taxon>Alveolata</taxon>
        <taxon>Ciliophora</taxon>
        <taxon>Intramacronucleata</taxon>
        <taxon>Oligohymenophorea</taxon>
        <taxon>Peniculida</taxon>
        <taxon>Parameciidae</taxon>
        <taxon>Paramecium</taxon>
    </lineage>
</organism>
<geneLocation type="mitochondrion"/>
<comment type="subcellular location">
    <subcellularLocation>
        <location>Mitochondrion</location>
    </subcellularLocation>
</comment>
<comment type="similarity">
    <text evidence="2">Belongs to the universal ribosomal protein uL2 family.</text>
</comment>